<proteinExistence type="inferred from homology"/>
<organism>
    <name type="scientific">Borreliella burgdorferi (strain ZS7)</name>
    <name type="common">Borrelia burgdorferi</name>
    <dbReference type="NCBI Taxonomy" id="445985"/>
    <lineage>
        <taxon>Bacteria</taxon>
        <taxon>Pseudomonadati</taxon>
        <taxon>Spirochaetota</taxon>
        <taxon>Spirochaetia</taxon>
        <taxon>Spirochaetales</taxon>
        <taxon>Borreliaceae</taxon>
        <taxon>Borreliella</taxon>
    </lineage>
</organism>
<sequence length="209" mass="23465">MERKVFSKDGKEIGTINLDDRVFNIEISHGSIYNAIKNELSNLRVGTSSTKTRSEVRGSSKKPWKQKGTGRARVGTKRNPVWIGGGIALGPKPRDYSYRLPKKVKKLAFKSVLSLRAADENSFKVIENFSVESGKTKDLALIIKNFASFNGKVVILLGNDDQMIKRAGKNIRDLKILSFDKLRVVDLFYAKNLIALESAVNKLNEFYIK</sequence>
<dbReference type="EMBL" id="CP001205">
    <property type="protein sequence ID" value="ACK74663.1"/>
    <property type="molecule type" value="Genomic_DNA"/>
</dbReference>
<dbReference type="RefSeq" id="WP_002657962.1">
    <property type="nucleotide sequence ID" value="NC_011728.1"/>
</dbReference>
<dbReference type="SMR" id="B7J244"/>
<dbReference type="GeneID" id="56567914"/>
<dbReference type="KEGG" id="bbz:BbuZS7_0490"/>
<dbReference type="HOGENOM" id="CLU_041575_5_2_12"/>
<dbReference type="Proteomes" id="UP000006901">
    <property type="component" value="Chromosome"/>
</dbReference>
<dbReference type="GO" id="GO:1990904">
    <property type="term" value="C:ribonucleoprotein complex"/>
    <property type="evidence" value="ECO:0007669"/>
    <property type="project" value="UniProtKB-KW"/>
</dbReference>
<dbReference type="GO" id="GO:0005840">
    <property type="term" value="C:ribosome"/>
    <property type="evidence" value="ECO:0007669"/>
    <property type="project" value="UniProtKB-KW"/>
</dbReference>
<dbReference type="GO" id="GO:0019843">
    <property type="term" value="F:rRNA binding"/>
    <property type="evidence" value="ECO:0007669"/>
    <property type="project" value="UniProtKB-UniRule"/>
</dbReference>
<dbReference type="GO" id="GO:0003735">
    <property type="term" value="F:structural constituent of ribosome"/>
    <property type="evidence" value="ECO:0007669"/>
    <property type="project" value="InterPro"/>
</dbReference>
<dbReference type="GO" id="GO:0006412">
    <property type="term" value="P:translation"/>
    <property type="evidence" value="ECO:0007669"/>
    <property type="project" value="UniProtKB-UniRule"/>
</dbReference>
<dbReference type="Gene3D" id="3.40.1370.10">
    <property type="match status" value="1"/>
</dbReference>
<dbReference type="HAMAP" id="MF_01328_B">
    <property type="entry name" value="Ribosomal_uL4_B"/>
    <property type="match status" value="1"/>
</dbReference>
<dbReference type="InterPro" id="IPR002136">
    <property type="entry name" value="Ribosomal_uL4"/>
</dbReference>
<dbReference type="InterPro" id="IPR013005">
    <property type="entry name" value="Ribosomal_uL4-like"/>
</dbReference>
<dbReference type="InterPro" id="IPR023574">
    <property type="entry name" value="Ribosomal_uL4_dom_sf"/>
</dbReference>
<dbReference type="NCBIfam" id="TIGR03953">
    <property type="entry name" value="rplD_bact"/>
    <property type="match status" value="1"/>
</dbReference>
<dbReference type="PANTHER" id="PTHR10746">
    <property type="entry name" value="50S RIBOSOMAL PROTEIN L4"/>
    <property type="match status" value="1"/>
</dbReference>
<dbReference type="PANTHER" id="PTHR10746:SF6">
    <property type="entry name" value="LARGE RIBOSOMAL SUBUNIT PROTEIN UL4M"/>
    <property type="match status" value="1"/>
</dbReference>
<dbReference type="Pfam" id="PF00573">
    <property type="entry name" value="Ribosomal_L4"/>
    <property type="match status" value="1"/>
</dbReference>
<dbReference type="SUPFAM" id="SSF52166">
    <property type="entry name" value="Ribosomal protein L4"/>
    <property type="match status" value="1"/>
</dbReference>
<reference key="1">
    <citation type="journal article" date="2011" name="J. Bacteriol.">
        <title>Whole-genome sequences of thirteen isolates of Borrelia burgdorferi.</title>
        <authorList>
            <person name="Schutzer S.E."/>
            <person name="Fraser-Liggett C.M."/>
            <person name="Casjens S.R."/>
            <person name="Qiu W.G."/>
            <person name="Dunn J.J."/>
            <person name="Mongodin E.F."/>
            <person name="Luft B.J."/>
        </authorList>
    </citation>
    <scope>NUCLEOTIDE SEQUENCE [LARGE SCALE GENOMIC DNA]</scope>
    <source>
        <strain>ZS7</strain>
    </source>
</reference>
<gene>
    <name evidence="1" type="primary">rplD</name>
    <name type="ordered locus">BbuZS7_0490</name>
</gene>
<feature type="chain" id="PRO_1000142084" description="Large ribosomal subunit protein uL4">
    <location>
        <begin position="1"/>
        <end position="209"/>
    </location>
</feature>
<feature type="region of interest" description="Disordered" evidence="2">
    <location>
        <begin position="47"/>
        <end position="72"/>
    </location>
</feature>
<feature type="compositionally biased region" description="Basic residues" evidence="2">
    <location>
        <begin position="59"/>
        <end position="72"/>
    </location>
</feature>
<protein>
    <recommendedName>
        <fullName evidence="1">Large ribosomal subunit protein uL4</fullName>
    </recommendedName>
    <alternativeName>
        <fullName evidence="3">50S ribosomal protein L4</fullName>
    </alternativeName>
</protein>
<comment type="function">
    <text evidence="1">One of the primary rRNA binding proteins, this protein initially binds near the 5'-end of the 23S rRNA. It is important during the early stages of 50S assembly. It makes multiple contacts with different domains of the 23S rRNA in the assembled 50S subunit and ribosome.</text>
</comment>
<comment type="function">
    <text evidence="1">Forms part of the polypeptide exit tunnel.</text>
</comment>
<comment type="subunit">
    <text evidence="1">Part of the 50S ribosomal subunit.</text>
</comment>
<comment type="similarity">
    <text evidence="1">Belongs to the universal ribosomal protein uL4 family.</text>
</comment>
<evidence type="ECO:0000255" key="1">
    <source>
        <dbReference type="HAMAP-Rule" id="MF_01328"/>
    </source>
</evidence>
<evidence type="ECO:0000256" key="2">
    <source>
        <dbReference type="SAM" id="MobiDB-lite"/>
    </source>
</evidence>
<evidence type="ECO:0000305" key="3"/>
<keyword id="KW-0687">Ribonucleoprotein</keyword>
<keyword id="KW-0689">Ribosomal protein</keyword>
<keyword id="KW-0694">RNA-binding</keyword>
<keyword id="KW-0699">rRNA-binding</keyword>
<accession>B7J244</accession>
<name>RL4_BORBZ</name>